<gene>
    <name evidence="1" type="primary">dnaG</name>
    <name type="ordered locus">Pars_1886</name>
</gene>
<reference key="1">
    <citation type="submission" date="2007-04" db="EMBL/GenBank/DDBJ databases">
        <title>Complete sequence of Pyrobaculum arsenaticum DSM 13514.</title>
        <authorList>
            <consortium name="US DOE Joint Genome Institute"/>
            <person name="Copeland A."/>
            <person name="Lucas S."/>
            <person name="Lapidus A."/>
            <person name="Barry K."/>
            <person name="Glavina del Rio T."/>
            <person name="Dalin E."/>
            <person name="Tice H."/>
            <person name="Pitluck S."/>
            <person name="Chain P."/>
            <person name="Malfatti S."/>
            <person name="Shin M."/>
            <person name="Vergez L."/>
            <person name="Schmutz J."/>
            <person name="Larimer F."/>
            <person name="Land M."/>
            <person name="Hauser L."/>
            <person name="Kyrpides N."/>
            <person name="Mikhailova N."/>
            <person name="Cozen A.E."/>
            <person name="Fitz-Gibbon S.T."/>
            <person name="House C.H."/>
            <person name="Saltikov C."/>
            <person name="Lowe T.M."/>
            <person name="Richardson P."/>
        </authorList>
    </citation>
    <scope>NUCLEOTIDE SEQUENCE [LARGE SCALE GENOMIC DNA]</scope>
    <source>
        <strain>ATCC 700994 / DSM 13514 / JCM 11321 / PZ6</strain>
    </source>
</reference>
<organism>
    <name type="scientific">Pyrobaculum arsenaticum (strain DSM 13514 / JCM 11321 / PZ6)</name>
    <dbReference type="NCBI Taxonomy" id="340102"/>
    <lineage>
        <taxon>Archaea</taxon>
        <taxon>Thermoproteota</taxon>
        <taxon>Thermoprotei</taxon>
        <taxon>Thermoproteales</taxon>
        <taxon>Thermoproteaceae</taxon>
        <taxon>Pyrobaculum</taxon>
    </lineage>
</organism>
<comment type="function">
    <text evidence="1">RNA polymerase that catalyzes the synthesis of short RNA molecules used as primers for DNA polymerase during DNA replication. Also part of the exosome, which is a complex involved in RNA degradation. Acts as a poly(A)-binding protein that enhances the interaction between heteromeric, adenine-rich transcripts and the exosome.</text>
</comment>
<comment type="catalytic activity">
    <reaction evidence="1">
        <text>ssDNA + n NTP = ssDNA/pppN(pN)n-1 hybrid + (n-1) diphosphate.</text>
        <dbReference type="EC" id="2.7.7.101"/>
    </reaction>
</comment>
<comment type="cofactor">
    <cofactor evidence="1">
        <name>Mg(2+)</name>
        <dbReference type="ChEBI" id="CHEBI:18420"/>
    </cofactor>
    <text evidence="1">Binds two Mg(2+) per subunit.</text>
</comment>
<comment type="subunit">
    <text evidence="1">Forms a ternary complex with MCM helicase and DNA. Component of the archaeal exosome complex.</text>
</comment>
<comment type="similarity">
    <text evidence="1">Belongs to the archaeal DnaG primase family.</text>
</comment>
<keyword id="KW-0235">DNA replication</keyword>
<keyword id="KW-0240">DNA-directed RNA polymerase</keyword>
<keyword id="KW-0271">Exosome</keyword>
<keyword id="KW-0460">Magnesium</keyword>
<keyword id="KW-0479">Metal-binding</keyword>
<keyword id="KW-0548">Nucleotidyltransferase</keyword>
<keyword id="KW-0639">Primosome</keyword>
<keyword id="KW-0804">Transcription</keyword>
<keyword id="KW-0808">Transferase</keyword>
<proteinExistence type="inferred from homology"/>
<evidence type="ECO:0000255" key="1">
    <source>
        <dbReference type="HAMAP-Rule" id="MF_00007"/>
    </source>
</evidence>
<evidence type="ECO:0000256" key="2">
    <source>
        <dbReference type="SAM" id="MobiDB-lite"/>
    </source>
</evidence>
<protein>
    <recommendedName>
        <fullName evidence="1">DNA primase DnaG</fullName>
        <ecNumber evidence="1">2.7.7.101</ecNumber>
    </recommendedName>
</protein>
<dbReference type="EC" id="2.7.7.101" evidence="1"/>
<dbReference type="EMBL" id="CP000660">
    <property type="protein sequence ID" value="ABP51437.1"/>
    <property type="molecule type" value="Genomic_DNA"/>
</dbReference>
<dbReference type="SMR" id="A4WM20"/>
<dbReference type="STRING" id="340102.Pars_1886"/>
<dbReference type="KEGG" id="pas:Pars_1886"/>
<dbReference type="HOGENOM" id="CLU_034626_0_0_2"/>
<dbReference type="OrthoDB" id="8643at2157"/>
<dbReference type="PhylomeDB" id="A4WM20"/>
<dbReference type="Proteomes" id="UP000001567">
    <property type="component" value="Chromosome"/>
</dbReference>
<dbReference type="GO" id="GO:0005737">
    <property type="term" value="C:cytoplasm"/>
    <property type="evidence" value="ECO:0007669"/>
    <property type="project" value="TreeGrafter"/>
</dbReference>
<dbReference type="GO" id="GO:0000428">
    <property type="term" value="C:DNA-directed RNA polymerase complex"/>
    <property type="evidence" value="ECO:0007669"/>
    <property type="project" value="UniProtKB-KW"/>
</dbReference>
<dbReference type="GO" id="GO:0000178">
    <property type="term" value="C:exosome (RNase complex)"/>
    <property type="evidence" value="ECO:0007669"/>
    <property type="project" value="UniProtKB-KW"/>
</dbReference>
<dbReference type="GO" id="GO:1990077">
    <property type="term" value="C:primosome complex"/>
    <property type="evidence" value="ECO:0007669"/>
    <property type="project" value="UniProtKB-KW"/>
</dbReference>
<dbReference type="GO" id="GO:0003899">
    <property type="term" value="F:DNA-directed RNA polymerase activity"/>
    <property type="evidence" value="ECO:0007669"/>
    <property type="project" value="InterPro"/>
</dbReference>
<dbReference type="GO" id="GO:0046872">
    <property type="term" value="F:metal ion binding"/>
    <property type="evidence" value="ECO:0007669"/>
    <property type="project" value="UniProtKB-KW"/>
</dbReference>
<dbReference type="GO" id="GO:0008143">
    <property type="term" value="F:poly(A) binding"/>
    <property type="evidence" value="ECO:0007669"/>
    <property type="project" value="InterPro"/>
</dbReference>
<dbReference type="GO" id="GO:0006269">
    <property type="term" value="P:DNA replication, synthesis of primer"/>
    <property type="evidence" value="ECO:0007669"/>
    <property type="project" value="UniProtKB-UniRule"/>
</dbReference>
<dbReference type="CDD" id="cd01029">
    <property type="entry name" value="TOPRIM_primases"/>
    <property type="match status" value="1"/>
</dbReference>
<dbReference type="FunFam" id="3.40.1360.10:FF:000010">
    <property type="entry name" value="DNA primase DnaG"/>
    <property type="match status" value="1"/>
</dbReference>
<dbReference type="Gene3D" id="3.40.1360.10">
    <property type="match status" value="1"/>
</dbReference>
<dbReference type="HAMAP" id="MF_00007">
    <property type="entry name" value="DNA_primase_DnaG_arc"/>
    <property type="match status" value="1"/>
</dbReference>
<dbReference type="InterPro" id="IPR050219">
    <property type="entry name" value="DnaG_primase"/>
</dbReference>
<dbReference type="InterPro" id="IPR020607">
    <property type="entry name" value="Primase_DnaG_arc"/>
</dbReference>
<dbReference type="InterPro" id="IPR034154">
    <property type="entry name" value="TOPRIM_DnaG/twinkle"/>
</dbReference>
<dbReference type="InterPro" id="IPR006171">
    <property type="entry name" value="TOPRIM_dom"/>
</dbReference>
<dbReference type="NCBIfam" id="NF003108">
    <property type="entry name" value="PRK04031.1-1"/>
    <property type="match status" value="1"/>
</dbReference>
<dbReference type="PANTHER" id="PTHR30313">
    <property type="entry name" value="DNA PRIMASE"/>
    <property type="match status" value="1"/>
</dbReference>
<dbReference type="PANTHER" id="PTHR30313:SF2">
    <property type="entry name" value="DNA PRIMASE"/>
    <property type="match status" value="1"/>
</dbReference>
<dbReference type="Pfam" id="PF13662">
    <property type="entry name" value="Toprim_4"/>
    <property type="match status" value="1"/>
</dbReference>
<dbReference type="SMART" id="SM00493">
    <property type="entry name" value="TOPRIM"/>
    <property type="match status" value="1"/>
</dbReference>
<dbReference type="SUPFAM" id="SSF56731">
    <property type="entry name" value="DNA primase core"/>
    <property type="match status" value="1"/>
</dbReference>
<dbReference type="PROSITE" id="PS50880">
    <property type="entry name" value="TOPRIM"/>
    <property type="match status" value="1"/>
</dbReference>
<sequence>MGALTIVAKYMIVAQIEVNGSVDKSDIIGALFSQTEGLLGKDMDLRELQMMGRIGRIEVDIFEKNGKTKAKIYIPSNLDRYETALVAALVESIERVGPYPASVKVIEIRDLREEKRKKIIEKAKELVKLIEEEILPDTKEIIERLKEDVAKAEVVEYGPERLPAGPDVDKSDAIIIVEGRADVVNLVKHGYRNVIALEGISRGVPQTIIDLSKKKNVTVFIDGDKGGELVLKELLKVAHVDYIARAPPGKEVEQLTAKEIAKALRNKISLEEWLAQQKASGERAEAPPQPAQQPQQEQPAPQRPIQAPFDLEKKIEEMLGTLEAEIYDQNWTLVKRLPVRELPDFLATSGDSIYAIILDGITTQRIVDLAAKKGVKVIITARTGPLTKVPEDMSIYTFEQLKKTE</sequence>
<feature type="chain" id="PRO_1000000564" description="DNA primase DnaG">
    <location>
        <begin position="1"/>
        <end position="405"/>
    </location>
</feature>
<feature type="domain" description="Toprim" evidence="1">
    <location>
        <begin position="172"/>
        <end position="248"/>
    </location>
</feature>
<feature type="region of interest" description="Disordered" evidence="2">
    <location>
        <begin position="279"/>
        <end position="303"/>
    </location>
</feature>
<feature type="compositionally biased region" description="Low complexity" evidence="2">
    <location>
        <begin position="292"/>
        <end position="303"/>
    </location>
</feature>
<feature type="binding site" evidence="1">
    <location>
        <position position="178"/>
    </location>
    <ligand>
        <name>Mg(2+)</name>
        <dbReference type="ChEBI" id="CHEBI:18420"/>
        <label>1</label>
        <note>catalytic</note>
    </ligand>
</feature>
<feature type="binding site" evidence="1">
    <location>
        <position position="222"/>
    </location>
    <ligand>
        <name>Mg(2+)</name>
        <dbReference type="ChEBI" id="CHEBI:18420"/>
        <label>1</label>
        <note>catalytic</note>
    </ligand>
</feature>
<feature type="binding site" evidence="1">
    <location>
        <position position="222"/>
    </location>
    <ligand>
        <name>Mg(2+)</name>
        <dbReference type="ChEBI" id="CHEBI:18420"/>
        <label>2</label>
    </ligand>
</feature>
<feature type="binding site" evidence="1">
    <location>
        <position position="224"/>
    </location>
    <ligand>
        <name>Mg(2+)</name>
        <dbReference type="ChEBI" id="CHEBI:18420"/>
        <label>2</label>
    </ligand>
</feature>
<accession>A4WM20</accession>
<name>DNAG_PYRAR</name>